<gene>
    <name type="primary">CPK25</name>
    <name type="ordered locus">At2g35890</name>
    <name type="ORF">F11F19.20</name>
</gene>
<protein>
    <recommendedName>
        <fullName>Calcium-dependent protein kinase 25</fullName>
        <ecNumber>2.7.11.1</ecNumber>
    </recommendedName>
</protein>
<feature type="initiator methionine" description="Removed" evidence="3">
    <location>
        <position position="1"/>
    </location>
</feature>
<feature type="chain" id="PRO_0000363347" description="Calcium-dependent protein kinase 25">
    <location>
        <begin position="2"/>
        <end position="520"/>
    </location>
</feature>
<feature type="domain" description="Protein kinase" evidence="4">
    <location>
        <begin position="132"/>
        <end position="390"/>
    </location>
</feature>
<feature type="domain" description="EF-hand 1" evidence="5">
    <location>
        <begin position="433"/>
        <end position="468"/>
    </location>
</feature>
<feature type="domain" description="EF-hand 2; degenerate" evidence="8">
    <location>
        <begin position="469"/>
        <end position="505"/>
    </location>
</feature>
<feature type="region of interest" description="Disordered" evidence="7">
    <location>
        <begin position="31"/>
        <end position="87"/>
    </location>
</feature>
<feature type="region of interest" description="Autoinhibitory domain" evidence="1">
    <location>
        <begin position="396"/>
        <end position="426"/>
    </location>
</feature>
<feature type="compositionally biased region" description="Basic and acidic residues" evidence="7">
    <location>
        <begin position="47"/>
        <end position="72"/>
    </location>
</feature>
<feature type="active site" description="Proton acceptor" evidence="4 6">
    <location>
        <position position="256"/>
    </location>
</feature>
<feature type="binding site" evidence="4">
    <location>
        <begin position="138"/>
        <end position="146"/>
    </location>
    <ligand>
        <name>ATP</name>
        <dbReference type="ChEBI" id="CHEBI:30616"/>
    </ligand>
</feature>
<feature type="binding site" evidence="4">
    <location>
        <position position="161"/>
    </location>
    <ligand>
        <name>ATP</name>
        <dbReference type="ChEBI" id="CHEBI:30616"/>
    </ligand>
</feature>
<feature type="binding site" evidence="8">
    <location>
        <position position="446"/>
    </location>
    <ligand>
        <name>Ca(2+)</name>
        <dbReference type="ChEBI" id="CHEBI:29108"/>
        <label>1</label>
    </ligand>
</feature>
<feature type="binding site" evidence="8">
    <location>
        <position position="450"/>
    </location>
    <ligand>
        <name>Ca(2+)</name>
        <dbReference type="ChEBI" id="CHEBI:29108"/>
        <label>1</label>
    </ligand>
</feature>
<feature type="binding site" evidence="8">
    <location>
        <position position="452"/>
    </location>
    <ligand>
        <name>Ca(2+)</name>
        <dbReference type="ChEBI" id="CHEBI:29108"/>
        <label>1</label>
    </ligand>
</feature>
<feature type="binding site" evidence="8">
    <location>
        <position position="457"/>
    </location>
    <ligand>
        <name>Ca(2+)</name>
        <dbReference type="ChEBI" id="CHEBI:29108"/>
        <label>1</label>
    </ligand>
</feature>
<feature type="binding site" evidence="8">
    <location>
        <position position="483"/>
    </location>
    <ligand>
        <name>Ca(2+)</name>
        <dbReference type="ChEBI" id="CHEBI:29108"/>
        <label>2</label>
    </ligand>
</feature>
<feature type="binding site" evidence="8">
    <location>
        <position position="487"/>
    </location>
    <ligand>
        <name>Ca(2+)</name>
        <dbReference type="ChEBI" id="CHEBI:29108"/>
        <label>2</label>
    </ligand>
</feature>
<feature type="binding site" evidence="8">
    <location>
        <position position="489"/>
    </location>
    <ligand>
        <name>Ca(2+)</name>
        <dbReference type="ChEBI" id="CHEBI:29108"/>
        <label>2</label>
    </ligand>
</feature>
<feature type="binding site" evidence="8">
    <location>
        <position position="494"/>
    </location>
    <ligand>
        <name>Ca(2+)</name>
        <dbReference type="ChEBI" id="CHEBI:29108"/>
        <label>2</label>
    </ligand>
</feature>
<feature type="modified residue" description="Phosphoserine" evidence="2">
    <location>
        <position position="296"/>
    </location>
</feature>
<feature type="lipid moiety-binding region" description="N-myristoyl glycine" evidence="3">
    <location>
        <position position="2"/>
    </location>
</feature>
<evidence type="ECO:0000250" key="1"/>
<evidence type="ECO:0000250" key="2">
    <source>
        <dbReference type="UniProtKB" id="Q9FKW4"/>
    </source>
</evidence>
<evidence type="ECO:0000255" key="3"/>
<evidence type="ECO:0000255" key="4">
    <source>
        <dbReference type="PROSITE-ProRule" id="PRU00159"/>
    </source>
</evidence>
<evidence type="ECO:0000255" key="5">
    <source>
        <dbReference type="PROSITE-ProRule" id="PRU00448"/>
    </source>
</evidence>
<evidence type="ECO:0000255" key="6">
    <source>
        <dbReference type="PROSITE-ProRule" id="PRU10027"/>
    </source>
</evidence>
<evidence type="ECO:0000256" key="7">
    <source>
        <dbReference type="SAM" id="MobiDB-lite"/>
    </source>
</evidence>
<evidence type="ECO:0000305" key="8"/>
<sequence length="520" mass="58852">MGNVCVHMVNNCVDTKSNSWVRPTDLIMDHPLKPQLQDKPPQPMLMNKDDDKTKLNDTHGDPKLLEGKEKPAQKQTSQGQGGRKCSDEEYKKRAIACANSKRKAHNVRRLMSAGLQAESVLKTKTGHLKEYYNLGSKLGHGQFGTTFVCVEKGTGEEYACKSIPKRKLENEEDVEDVRREIEIMKHLLGQPNVISIKGAYEDSVAVHMVMELCRGGELFDRIVERGHYSERKAAHLAKVILGVVQTCHSLGVMHRDLKPENFLFVNDDEDSPLKAIDFGLSMFLKPGENFTDVVGSPYYIAPEVLNKNYGPEADIWSAGVMIYVLLSGSAPFWGETEEEIFNEVLEGELDLTSDPWPQVSESAKDLIRKMLERNPIQRLTAQQVLCHPWIRDEGNAPDTPLDTTVLSRLKKFSATDKLKKMALRVIAERLSEEEIHELRETFKTIDSGKSGRVTYKELKNGLERFNTNLDNSDINSLMQIPTDVHLEDTVDYNEFIEAIVRLRQIQEEEANDRLESSTKV</sequence>
<keyword id="KW-0067">ATP-binding</keyword>
<keyword id="KW-0106">Calcium</keyword>
<keyword id="KW-0418">Kinase</keyword>
<keyword id="KW-0449">Lipoprotein</keyword>
<keyword id="KW-0472">Membrane</keyword>
<keyword id="KW-0479">Metal-binding</keyword>
<keyword id="KW-0519">Myristate</keyword>
<keyword id="KW-0547">Nucleotide-binding</keyword>
<keyword id="KW-0597">Phosphoprotein</keyword>
<keyword id="KW-1185">Reference proteome</keyword>
<keyword id="KW-0677">Repeat</keyword>
<keyword id="KW-0723">Serine/threonine-protein kinase</keyword>
<keyword id="KW-0808">Transferase</keyword>
<organism>
    <name type="scientific">Arabidopsis thaliana</name>
    <name type="common">Mouse-ear cress</name>
    <dbReference type="NCBI Taxonomy" id="3702"/>
    <lineage>
        <taxon>Eukaryota</taxon>
        <taxon>Viridiplantae</taxon>
        <taxon>Streptophyta</taxon>
        <taxon>Embryophyta</taxon>
        <taxon>Tracheophyta</taxon>
        <taxon>Spermatophyta</taxon>
        <taxon>Magnoliopsida</taxon>
        <taxon>eudicotyledons</taxon>
        <taxon>Gunneridae</taxon>
        <taxon>Pentapetalae</taxon>
        <taxon>rosids</taxon>
        <taxon>malvids</taxon>
        <taxon>Brassicales</taxon>
        <taxon>Brassicaceae</taxon>
        <taxon>Camelineae</taxon>
        <taxon>Arabidopsis</taxon>
    </lineage>
</organism>
<proteinExistence type="evidence at transcript level"/>
<name>CDPKP_ARATH</name>
<reference key="1">
    <citation type="journal article" date="1999" name="Nature">
        <title>Sequence and analysis of chromosome 2 of the plant Arabidopsis thaliana.</title>
        <authorList>
            <person name="Lin X."/>
            <person name="Kaul S."/>
            <person name="Rounsley S.D."/>
            <person name="Shea T.P."/>
            <person name="Benito M.-I."/>
            <person name="Town C.D."/>
            <person name="Fujii C.Y."/>
            <person name="Mason T.M."/>
            <person name="Bowman C.L."/>
            <person name="Barnstead M.E."/>
            <person name="Feldblyum T.V."/>
            <person name="Buell C.R."/>
            <person name="Ketchum K.A."/>
            <person name="Lee J.J."/>
            <person name="Ronning C.M."/>
            <person name="Koo H.L."/>
            <person name="Moffat K.S."/>
            <person name="Cronin L.A."/>
            <person name="Shen M."/>
            <person name="Pai G."/>
            <person name="Van Aken S."/>
            <person name="Umayam L."/>
            <person name="Tallon L.J."/>
            <person name="Gill J.E."/>
            <person name="Adams M.D."/>
            <person name="Carrera A.J."/>
            <person name="Creasy T.H."/>
            <person name="Goodman H.M."/>
            <person name="Somerville C.R."/>
            <person name="Copenhaver G.P."/>
            <person name="Preuss D."/>
            <person name="Nierman W.C."/>
            <person name="White O."/>
            <person name="Eisen J.A."/>
            <person name="Salzberg S.L."/>
            <person name="Fraser C.M."/>
            <person name="Venter J.C."/>
        </authorList>
    </citation>
    <scope>NUCLEOTIDE SEQUENCE [LARGE SCALE GENOMIC DNA]</scope>
    <source>
        <strain>cv. Columbia</strain>
    </source>
</reference>
<reference key="2">
    <citation type="journal article" date="2017" name="Plant J.">
        <title>Araport11: a complete reannotation of the Arabidopsis thaliana reference genome.</title>
        <authorList>
            <person name="Cheng C.Y."/>
            <person name="Krishnakumar V."/>
            <person name="Chan A.P."/>
            <person name="Thibaud-Nissen F."/>
            <person name="Schobel S."/>
            <person name="Town C.D."/>
        </authorList>
    </citation>
    <scope>GENOME REANNOTATION</scope>
    <source>
        <strain>cv. Columbia</strain>
    </source>
</reference>
<reference key="3">
    <citation type="journal article" date="2006" name="Plant Biotechnol. J.">
        <title>Simultaneous high-throughput recombinational cloning of open reading frames in closed and open configurations.</title>
        <authorList>
            <person name="Underwood B.A."/>
            <person name="Vanderhaeghen R."/>
            <person name="Whitford R."/>
            <person name="Town C.D."/>
            <person name="Hilson P."/>
        </authorList>
    </citation>
    <scope>NUCLEOTIDE SEQUENCE [LARGE SCALE MRNA]</scope>
    <source>
        <strain>cv. Columbia</strain>
    </source>
</reference>
<reference key="4">
    <citation type="journal article" date="2001" name="New Phytol.">
        <title>The CDPK superfamily of protein kinases.</title>
        <authorList>
            <person name="Harmon A.C."/>
            <person name="Gribskov M."/>
            <person name="Gubrium E."/>
            <person name="Harper J.F."/>
        </authorList>
    </citation>
    <scope>GENE FAMILY</scope>
    <scope>NOMENCLATURE</scope>
</reference>
<reference key="5">
    <citation type="journal article" date="2002" name="Plant Physiol.">
        <title>Calcium signaling through protein kinases. The Arabidopsis calcium-dependent protein kinase gene family.</title>
        <authorList>
            <person name="Cheng S.-H."/>
            <person name="Willmann M.R."/>
            <person name="Chen H.-C."/>
            <person name="Sheen J."/>
        </authorList>
    </citation>
    <scope>GENE FAMILY</scope>
    <scope>NOMENCLATURE</scope>
</reference>
<reference key="6">
    <citation type="journal article" date="2003" name="Plant Physiol.">
        <title>The Arabidopsis CDPK-SnRK superfamily of protein kinases.</title>
        <authorList>
            <person name="Hrabak E.M."/>
            <person name="Chan C.W.M."/>
            <person name="Gribskov M."/>
            <person name="Harper J.F."/>
            <person name="Choi J.H."/>
            <person name="Halford N."/>
            <person name="Kudla J."/>
            <person name="Luan S."/>
            <person name="Nimmo H.G."/>
            <person name="Sussman M.R."/>
            <person name="Thomas M."/>
            <person name="Walker-Simmons K."/>
            <person name="Zhu J.-K."/>
            <person name="Harmon A.C."/>
        </authorList>
    </citation>
    <scope>GENE FAMILY</scope>
    <scope>NOMENCLATURE</scope>
</reference>
<comment type="function">
    <text>May play a role in signal transduction pathways that involve calcium as a second messenger.</text>
</comment>
<comment type="catalytic activity">
    <reaction>
        <text>L-seryl-[protein] + ATP = O-phospho-L-seryl-[protein] + ADP + H(+)</text>
        <dbReference type="Rhea" id="RHEA:17989"/>
        <dbReference type="Rhea" id="RHEA-COMP:9863"/>
        <dbReference type="Rhea" id="RHEA-COMP:11604"/>
        <dbReference type="ChEBI" id="CHEBI:15378"/>
        <dbReference type="ChEBI" id="CHEBI:29999"/>
        <dbReference type="ChEBI" id="CHEBI:30616"/>
        <dbReference type="ChEBI" id="CHEBI:83421"/>
        <dbReference type="ChEBI" id="CHEBI:456216"/>
        <dbReference type="EC" id="2.7.11.1"/>
    </reaction>
</comment>
<comment type="catalytic activity">
    <reaction>
        <text>L-threonyl-[protein] + ATP = O-phospho-L-threonyl-[protein] + ADP + H(+)</text>
        <dbReference type="Rhea" id="RHEA:46608"/>
        <dbReference type="Rhea" id="RHEA-COMP:11060"/>
        <dbReference type="Rhea" id="RHEA-COMP:11605"/>
        <dbReference type="ChEBI" id="CHEBI:15378"/>
        <dbReference type="ChEBI" id="CHEBI:30013"/>
        <dbReference type="ChEBI" id="CHEBI:30616"/>
        <dbReference type="ChEBI" id="CHEBI:61977"/>
        <dbReference type="ChEBI" id="CHEBI:456216"/>
        <dbReference type="EC" id="2.7.11.1"/>
    </reaction>
</comment>
<comment type="activity regulation">
    <text evidence="1">Activated by calcium. Autophosphorylation may play an important role in the regulation of the kinase activity (By similarity).</text>
</comment>
<comment type="subcellular location">
    <subcellularLocation>
        <location evidence="8">Membrane</location>
        <topology evidence="8">Lipid-anchor</topology>
    </subcellularLocation>
</comment>
<comment type="domain">
    <text evidence="1">There are 3 contiguous domains conserved in the CDPK subfamily: a kinase domain, an autoinhibitory (junction) domain and a calmodulin-like domain. The autoinhibitory domain (396-426) inactivates kinase activity under calcium-free conditions (By similarity).</text>
</comment>
<comment type="similarity">
    <text evidence="4">Belongs to the protein kinase superfamily. Ser/Thr protein kinase family. CDPK subfamily.</text>
</comment>
<comment type="caution">
    <text evidence="8">Lacks two EF-hand domains in the calmodulin-like domain, which are conserved features of the CDPK ubfamily.</text>
</comment>
<dbReference type="EC" id="2.7.11.1"/>
<dbReference type="EMBL" id="AC007017">
    <property type="protein sequence ID" value="AAD21468.1"/>
    <property type="molecule type" value="Genomic_DNA"/>
</dbReference>
<dbReference type="EMBL" id="CP002685">
    <property type="protein sequence ID" value="AEC09174.1"/>
    <property type="molecule type" value="Genomic_DNA"/>
</dbReference>
<dbReference type="EMBL" id="CP002685">
    <property type="protein sequence ID" value="ANM62289.1"/>
    <property type="molecule type" value="Genomic_DNA"/>
</dbReference>
<dbReference type="EMBL" id="DQ446601">
    <property type="protein sequence ID" value="ABE65887.1"/>
    <property type="molecule type" value="mRNA"/>
</dbReference>
<dbReference type="PIR" id="C84774">
    <property type="entry name" value="C84774"/>
</dbReference>
<dbReference type="RefSeq" id="NP_001318361.1">
    <property type="nucleotide sequence ID" value="NM_001336578.1"/>
</dbReference>
<dbReference type="RefSeq" id="NP_181133.1">
    <property type="nucleotide sequence ID" value="NM_129148.2"/>
</dbReference>
<dbReference type="SMR" id="Q9SJ61"/>
<dbReference type="BioGRID" id="3506">
    <property type="interactions" value="1"/>
</dbReference>
<dbReference type="FunCoup" id="Q9SJ61">
    <property type="interactions" value="757"/>
</dbReference>
<dbReference type="IntAct" id="Q9SJ61">
    <property type="interactions" value="1"/>
</dbReference>
<dbReference type="STRING" id="3702.Q9SJ61"/>
<dbReference type="PaxDb" id="3702-AT2G35890.1"/>
<dbReference type="ProteomicsDB" id="220383"/>
<dbReference type="EnsemblPlants" id="AT2G35890.1">
    <property type="protein sequence ID" value="AT2G35890.1"/>
    <property type="gene ID" value="AT2G35890"/>
</dbReference>
<dbReference type="EnsemblPlants" id="AT2G35890.2">
    <property type="protein sequence ID" value="AT2G35890.2"/>
    <property type="gene ID" value="AT2G35890"/>
</dbReference>
<dbReference type="GeneID" id="818162"/>
<dbReference type="Gramene" id="AT2G35890.1">
    <property type="protein sequence ID" value="AT2G35890.1"/>
    <property type="gene ID" value="AT2G35890"/>
</dbReference>
<dbReference type="Gramene" id="AT2G35890.2">
    <property type="protein sequence ID" value="AT2G35890.2"/>
    <property type="gene ID" value="AT2G35890"/>
</dbReference>
<dbReference type="KEGG" id="ath:AT2G35890"/>
<dbReference type="Araport" id="AT2G35890"/>
<dbReference type="TAIR" id="AT2G35890">
    <property type="gene designation" value="CPK25"/>
</dbReference>
<dbReference type="eggNOG" id="KOG0032">
    <property type="taxonomic scope" value="Eukaryota"/>
</dbReference>
<dbReference type="HOGENOM" id="CLU_000288_37_4_1"/>
<dbReference type="InParanoid" id="Q9SJ61"/>
<dbReference type="OMA" id="DHPLKPQ"/>
<dbReference type="OrthoDB" id="40902at2759"/>
<dbReference type="PhylomeDB" id="Q9SJ61"/>
<dbReference type="PRO" id="PR:Q9SJ61"/>
<dbReference type="Proteomes" id="UP000006548">
    <property type="component" value="Chromosome 2"/>
</dbReference>
<dbReference type="ExpressionAtlas" id="Q9SJ61">
    <property type="expression patterns" value="baseline and differential"/>
</dbReference>
<dbReference type="GO" id="GO:0016020">
    <property type="term" value="C:membrane"/>
    <property type="evidence" value="ECO:0007669"/>
    <property type="project" value="UniProtKB-SubCell"/>
</dbReference>
<dbReference type="GO" id="GO:0005524">
    <property type="term" value="F:ATP binding"/>
    <property type="evidence" value="ECO:0007669"/>
    <property type="project" value="UniProtKB-KW"/>
</dbReference>
<dbReference type="GO" id="GO:0005509">
    <property type="term" value="F:calcium ion binding"/>
    <property type="evidence" value="ECO:0007669"/>
    <property type="project" value="InterPro"/>
</dbReference>
<dbReference type="GO" id="GO:0106310">
    <property type="term" value="F:protein serine kinase activity"/>
    <property type="evidence" value="ECO:0007669"/>
    <property type="project" value="RHEA"/>
</dbReference>
<dbReference type="GO" id="GO:0004674">
    <property type="term" value="F:protein serine/threonine kinase activity"/>
    <property type="evidence" value="ECO:0007669"/>
    <property type="project" value="UniProtKB-KW"/>
</dbReference>
<dbReference type="CDD" id="cd00051">
    <property type="entry name" value="EFh"/>
    <property type="match status" value="1"/>
</dbReference>
<dbReference type="CDD" id="cd05117">
    <property type="entry name" value="STKc_CAMK"/>
    <property type="match status" value="1"/>
</dbReference>
<dbReference type="FunFam" id="3.30.200.20:FF:000004">
    <property type="entry name" value="Calcium-dependent protein kinase 1"/>
    <property type="match status" value="1"/>
</dbReference>
<dbReference type="FunFam" id="1.10.510.10:FF:000249">
    <property type="entry name" value="Calcium-dependent protein kinase SK5"/>
    <property type="match status" value="1"/>
</dbReference>
<dbReference type="Gene3D" id="1.10.238.10">
    <property type="entry name" value="EF-hand"/>
    <property type="match status" value="2"/>
</dbReference>
<dbReference type="Gene3D" id="3.30.200.20">
    <property type="entry name" value="Phosphorylase Kinase, domain 1"/>
    <property type="match status" value="1"/>
</dbReference>
<dbReference type="Gene3D" id="1.10.510.10">
    <property type="entry name" value="Transferase(Phosphotransferase) domain 1"/>
    <property type="match status" value="1"/>
</dbReference>
<dbReference type="InterPro" id="IPR050205">
    <property type="entry name" value="CDPK_Ser/Thr_kinases"/>
</dbReference>
<dbReference type="InterPro" id="IPR011992">
    <property type="entry name" value="EF-hand-dom_pair"/>
</dbReference>
<dbReference type="InterPro" id="IPR002048">
    <property type="entry name" value="EF_hand_dom"/>
</dbReference>
<dbReference type="InterPro" id="IPR011009">
    <property type="entry name" value="Kinase-like_dom_sf"/>
</dbReference>
<dbReference type="InterPro" id="IPR000719">
    <property type="entry name" value="Prot_kinase_dom"/>
</dbReference>
<dbReference type="InterPro" id="IPR017441">
    <property type="entry name" value="Protein_kinase_ATP_BS"/>
</dbReference>
<dbReference type="InterPro" id="IPR008271">
    <property type="entry name" value="Ser/Thr_kinase_AS"/>
</dbReference>
<dbReference type="PANTHER" id="PTHR24349">
    <property type="entry name" value="SERINE/THREONINE-PROTEIN KINASE"/>
    <property type="match status" value="1"/>
</dbReference>
<dbReference type="Pfam" id="PF00069">
    <property type="entry name" value="Pkinase"/>
    <property type="match status" value="1"/>
</dbReference>
<dbReference type="SMART" id="SM00220">
    <property type="entry name" value="S_TKc"/>
    <property type="match status" value="1"/>
</dbReference>
<dbReference type="SUPFAM" id="SSF47473">
    <property type="entry name" value="EF-hand"/>
    <property type="match status" value="1"/>
</dbReference>
<dbReference type="SUPFAM" id="SSF56112">
    <property type="entry name" value="Protein kinase-like (PK-like)"/>
    <property type="match status" value="1"/>
</dbReference>
<dbReference type="PROSITE" id="PS50222">
    <property type="entry name" value="EF_HAND_2"/>
    <property type="match status" value="1"/>
</dbReference>
<dbReference type="PROSITE" id="PS00107">
    <property type="entry name" value="PROTEIN_KINASE_ATP"/>
    <property type="match status" value="1"/>
</dbReference>
<dbReference type="PROSITE" id="PS50011">
    <property type="entry name" value="PROTEIN_KINASE_DOM"/>
    <property type="match status" value="1"/>
</dbReference>
<dbReference type="PROSITE" id="PS00108">
    <property type="entry name" value="PROTEIN_KINASE_ST"/>
    <property type="match status" value="1"/>
</dbReference>
<accession>Q9SJ61</accession>